<feature type="chain" id="PRO_1000013153" description="Acyl-[acyl-carrier-protein]--UDP-N-acetylglucosamine O-acyltransferase">
    <location>
        <begin position="1"/>
        <end position="262"/>
    </location>
</feature>
<name>LPXA_BURMA</name>
<accession>Q62JD6</accession>
<gene>
    <name evidence="1" type="primary">lpxA</name>
    <name type="ordered locus">BMA1543</name>
</gene>
<comment type="function">
    <text evidence="1">Involved in the biosynthesis of lipid A, a phosphorylated glycolipid that anchors the lipopolysaccharide to the outer membrane of the cell.</text>
</comment>
<comment type="catalytic activity">
    <reaction evidence="1">
        <text>a (3R)-hydroxyacyl-[ACP] + UDP-N-acetyl-alpha-D-glucosamine = a UDP-3-O-[(3R)-3-hydroxyacyl]-N-acetyl-alpha-D-glucosamine + holo-[ACP]</text>
        <dbReference type="Rhea" id="RHEA:67812"/>
        <dbReference type="Rhea" id="RHEA-COMP:9685"/>
        <dbReference type="Rhea" id="RHEA-COMP:9945"/>
        <dbReference type="ChEBI" id="CHEBI:57705"/>
        <dbReference type="ChEBI" id="CHEBI:64479"/>
        <dbReference type="ChEBI" id="CHEBI:78827"/>
        <dbReference type="ChEBI" id="CHEBI:173225"/>
        <dbReference type="EC" id="2.3.1.129"/>
    </reaction>
</comment>
<comment type="pathway">
    <text evidence="1">Glycolipid biosynthesis; lipid IV(A) biosynthesis; lipid IV(A) from (3R)-3-hydroxytetradecanoyl-[acyl-carrier-protein] and UDP-N-acetyl-alpha-D-glucosamine: step 1/6.</text>
</comment>
<comment type="subunit">
    <text evidence="1">Homotrimer.</text>
</comment>
<comment type="subcellular location">
    <subcellularLocation>
        <location evidence="1">Cytoplasm</location>
    </subcellularLocation>
</comment>
<comment type="similarity">
    <text evidence="1">Belongs to the transferase hexapeptide repeat family. LpxA subfamily.</text>
</comment>
<protein>
    <recommendedName>
        <fullName evidence="1">Acyl-[acyl-carrier-protein]--UDP-N-acetylglucosamine O-acyltransferase</fullName>
        <shortName evidence="1">UDP-N-acetylglucosamine acyltransferase</shortName>
        <ecNumber evidence="1">2.3.1.129</ecNumber>
    </recommendedName>
</protein>
<evidence type="ECO:0000255" key="1">
    <source>
        <dbReference type="HAMAP-Rule" id="MF_00387"/>
    </source>
</evidence>
<organism>
    <name type="scientific">Burkholderia mallei (strain ATCC 23344)</name>
    <dbReference type="NCBI Taxonomy" id="243160"/>
    <lineage>
        <taxon>Bacteria</taxon>
        <taxon>Pseudomonadati</taxon>
        <taxon>Pseudomonadota</taxon>
        <taxon>Betaproteobacteria</taxon>
        <taxon>Burkholderiales</taxon>
        <taxon>Burkholderiaceae</taxon>
        <taxon>Burkholderia</taxon>
        <taxon>pseudomallei group</taxon>
    </lineage>
</organism>
<keyword id="KW-0012">Acyltransferase</keyword>
<keyword id="KW-0963">Cytoplasm</keyword>
<keyword id="KW-0441">Lipid A biosynthesis</keyword>
<keyword id="KW-0444">Lipid biosynthesis</keyword>
<keyword id="KW-0443">Lipid metabolism</keyword>
<keyword id="KW-1185">Reference proteome</keyword>
<keyword id="KW-0677">Repeat</keyword>
<keyword id="KW-0808">Transferase</keyword>
<dbReference type="EC" id="2.3.1.129" evidence="1"/>
<dbReference type="EMBL" id="CP000010">
    <property type="protein sequence ID" value="AAU47743.1"/>
    <property type="molecule type" value="Genomic_DNA"/>
</dbReference>
<dbReference type="RefSeq" id="WP_004193051.1">
    <property type="nucleotide sequence ID" value="NC_006348.1"/>
</dbReference>
<dbReference type="RefSeq" id="YP_103183.1">
    <property type="nucleotide sequence ID" value="NC_006348.1"/>
</dbReference>
<dbReference type="SMR" id="Q62JD6"/>
<dbReference type="GeneID" id="93060688"/>
<dbReference type="KEGG" id="bma:BMA1543"/>
<dbReference type="PATRIC" id="fig|243160.12.peg.1587"/>
<dbReference type="eggNOG" id="COG1043">
    <property type="taxonomic scope" value="Bacteria"/>
</dbReference>
<dbReference type="HOGENOM" id="CLU_061249_0_0_4"/>
<dbReference type="UniPathway" id="UPA00359">
    <property type="reaction ID" value="UER00477"/>
</dbReference>
<dbReference type="Proteomes" id="UP000006693">
    <property type="component" value="Chromosome 1"/>
</dbReference>
<dbReference type="GO" id="GO:0005737">
    <property type="term" value="C:cytoplasm"/>
    <property type="evidence" value="ECO:0007669"/>
    <property type="project" value="UniProtKB-SubCell"/>
</dbReference>
<dbReference type="GO" id="GO:0016020">
    <property type="term" value="C:membrane"/>
    <property type="evidence" value="ECO:0007669"/>
    <property type="project" value="GOC"/>
</dbReference>
<dbReference type="GO" id="GO:0008780">
    <property type="term" value="F:acyl-[acyl-carrier-protein]-UDP-N-acetylglucosamine O-acyltransferase activity"/>
    <property type="evidence" value="ECO:0007669"/>
    <property type="project" value="UniProtKB-UniRule"/>
</dbReference>
<dbReference type="GO" id="GO:0009245">
    <property type="term" value="P:lipid A biosynthetic process"/>
    <property type="evidence" value="ECO:0007669"/>
    <property type="project" value="UniProtKB-UniRule"/>
</dbReference>
<dbReference type="CDD" id="cd03351">
    <property type="entry name" value="LbH_UDP-GlcNAc_AT"/>
    <property type="match status" value="1"/>
</dbReference>
<dbReference type="Gene3D" id="2.160.10.10">
    <property type="entry name" value="Hexapeptide repeat proteins"/>
    <property type="match status" value="1"/>
</dbReference>
<dbReference type="Gene3D" id="1.20.1180.10">
    <property type="entry name" value="Udp N-acetylglucosamine O-acyltransferase, C-terminal domain"/>
    <property type="match status" value="1"/>
</dbReference>
<dbReference type="HAMAP" id="MF_00387">
    <property type="entry name" value="LpxA"/>
    <property type="match status" value="1"/>
</dbReference>
<dbReference type="InterPro" id="IPR029098">
    <property type="entry name" value="Acetyltransf_C"/>
</dbReference>
<dbReference type="InterPro" id="IPR037157">
    <property type="entry name" value="Acetyltransf_C_sf"/>
</dbReference>
<dbReference type="InterPro" id="IPR001451">
    <property type="entry name" value="Hexapep"/>
</dbReference>
<dbReference type="InterPro" id="IPR010137">
    <property type="entry name" value="Lipid_A_LpxA"/>
</dbReference>
<dbReference type="InterPro" id="IPR011004">
    <property type="entry name" value="Trimer_LpxA-like_sf"/>
</dbReference>
<dbReference type="NCBIfam" id="TIGR01852">
    <property type="entry name" value="lipid_A_lpxA"/>
    <property type="match status" value="1"/>
</dbReference>
<dbReference type="NCBIfam" id="NF003657">
    <property type="entry name" value="PRK05289.1"/>
    <property type="match status" value="1"/>
</dbReference>
<dbReference type="PANTHER" id="PTHR43480">
    <property type="entry name" value="ACYL-[ACYL-CARRIER-PROTEIN]--UDP-N-ACETYLGLUCOSAMINE O-ACYLTRANSFERASE"/>
    <property type="match status" value="1"/>
</dbReference>
<dbReference type="PANTHER" id="PTHR43480:SF1">
    <property type="entry name" value="ACYL-[ACYL-CARRIER-PROTEIN]--UDP-N-ACETYLGLUCOSAMINE O-ACYLTRANSFERASE, MITOCHONDRIAL-RELATED"/>
    <property type="match status" value="1"/>
</dbReference>
<dbReference type="Pfam" id="PF13720">
    <property type="entry name" value="Acetyltransf_11"/>
    <property type="match status" value="1"/>
</dbReference>
<dbReference type="Pfam" id="PF00132">
    <property type="entry name" value="Hexapep"/>
    <property type="match status" value="2"/>
</dbReference>
<dbReference type="PIRSF" id="PIRSF000456">
    <property type="entry name" value="UDP-GlcNAc_acltr"/>
    <property type="match status" value="1"/>
</dbReference>
<dbReference type="SUPFAM" id="SSF51161">
    <property type="entry name" value="Trimeric LpxA-like enzymes"/>
    <property type="match status" value="1"/>
</dbReference>
<dbReference type="PROSITE" id="PS00101">
    <property type="entry name" value="HEXAPEP_TRANSFERASES"/>
    <property type="match status" value="1"/>
</dbReference>
<sequence length="262" mass="27941">MSRIHPTAIIEPGAQLHETVEVGPYAIVGSHVTIGARTTIGSHSVIEGHTTIGEDNRIGHYASVGGRPQDMKYKDEPTRLVIGDRNTIREFTTIHTGTVQDTGVTTLGDDNWIMAYVHIGHDCRVGSHVILSSNAQMAGHVEIGDWAIVGGMSGVHQFVRIGAHSMLGGASALVQDIPPFVIAAGNKAEPHGINVEGLRRRGFSPDAISALRSAYRILYKNSLSLEEAKVQLSELAQAGGDGDAAVKSLVDFVESSQRGIIR</sequence>
<proteinExistence type="inferred from homology"/>
<reference key="1">
    <citation type="journal article" date="2004" name="Proc. Natl. Acad. Sci. U.S.A.">
        <title>Structural flexibility in the Burkholderia mallei genome.</title>
        <authorList>
            <person name="Nierman W.C."/>
            <person name="DeShazer D."/>
            <person name="Kim H.S."/>
            <person name="Tettelin H."/>
            <person name="Nelson K.E."/>
            <person name="Feldblyum T.V."/>
            <person name="Ulrich R.L."/>
            <person name="Ronning C.M."/>
            <person name="Brinkac L.M."/>
            <person name="Daugherty S.C."/>
            <person name="Davidsen T.D."/>
            <person name="DeBoy R.T."/>
            <person name="Dimitrov G."/>
            <person name="Dodson R.J."/>
            <person name="Durkin A.S."/>
            <person name="Gwinn M.L."/>
            <person name="Haft D.H."/>
            <person name="Khouri H.M."/>
            <person name="Kolonay J.F."/>
            <person name="Madupu R."/>
            <person name="Mohammoud Y."/>
            <person name="Nelson W.C."/>
            <person name="Radune D."/>
            <person name="Romero C.M."/>
            <person name="Sarria S."/>
            <person name="Selengut J."/>
            <person name="Shamblin C."/>
            <person name="Sullivan S.A."/>
            <person name="White O."/>
            <person name="Yu Y."/>
            <person name="Zafar N."/>
            <person name="Zhou L."/>
            <person name="Fraser C.M."/>
        </authorList>
    </citation>
    <scope>NUCLEOTIDE SEQUENCE [LARGE SCALE GENOMIC DNA]</scope>
    <source>
        <strain>ATCC 23344</strain>
    </source>
</reference>